<organism>
    <name type="scientific">Chlorobium phaeovibrioides (strain DSM 265 / 1930)</name>
    <name type="common">Prosthecochloris vibrioformis (strain DSM 265)</name>
    <dbReference type="NCBI Taxonomy" id="290318"/>
    <lineage>
        <taxon>Bacteria</taxon>
        <taxon>Pseudomonadati</taxon>
        <taxon>Chlorobiota</taxon>
        <taxon>Chlorobiia</taxon>
        <taxon>Chlorobiales</taxon>
        <taxon>Chlorobiaceae</taxon>
        <taxon>Chlorobium/Pelodictyon group</taxon>
        <taxon>Chlorobium</taxon>
    </lineage>
</organism>
<gene>
    <name evidence="1" type="primary">frr</name>
    <name type="ordered locus">Cvib_0408</name>
</gene>
<accession>A4SD71</accession>
<comment type="function">
    <text evidence="1">Responsible for the release of ribosomes from messenger RNA at the termination of protein biosynthesis. May increase the efficiency of translation by recycling ribosomes from one round of translation to another.</text>
</comment>
<comment type="subcellular location">
    <subcellularLocation>
        <location evidence="1">Cytoplasm</location>
    </subcellularLocation>
</comment>
<comment type="similarity">
    <text evidence="1">Belongs to the RRF family.</text>
</comment>
<sequence>MSVREVIQKNEAKLKKSIEAFQHEIASIRTGKATTALLDRVKVEAYGQLMPLKQVGNIGVADVHTLMVQVWDKGMVGPAEKAIRDANLGLNPVAEGQSIRVSIPPLTEERRKEFVKLTRKFGEDSKVSLRNLRRDMIQEIEKLEKEKTIGEDEKNRGKKDADELLHKYEKQINELISHKEKEIMEV</sequence>
<dbReference type="EMBL" id="CP000607">
    <property type="protein sequence ID" value="ABP36430.1"/>
    <property type="molecule type" value="Genomic_DNA"/>
</dbReference>
<dbReference type="SMR" id="A4SD71"/>
<dbReference type="STRING" id="290318.Cvib_0408"/>
<dbReference type="KEGG" id="pvi:Cvib_0408"/>
<dbReference type="eggNOG" id="COG0233">
    <property type="taxonomic scope" value="Bacteria"/>
</dbReference>
<dbReference type="HOGENOM" id="CLU_073981_2_0_10"/>
<dbReference type="OrthoDB" id="9804006at2"/>
<dbReference type="GO" id="GO:0005737">
    <property type="term" value="C:cytoplasm"/>
    <property type="evidence" value="ECO:0007669"/>
    <property type="project" value="UniProtKB-SubCell"/>
</dbReference>
<dbReference type="GO" id="GO:0043023">
    <property type="term" value="F:ribosomal large subunit binding"/>
    <property type="evidence" value="ECO:0007669"/>
    <property type="project" value="TreeGrafter"/>
</dbReference>
<dbReference type="GO" id="GO:0006415">
    <property type="term" value="P:translational termination"/>
    <property type="evidence" value="ECO:0007669"/>
    <property type="project" value="UniProtKB-UniRule"/>
</dbReference>
<dbReference type="CDD" id="cd00520">
    <property type="entry name" value="RRF"/>
    <property type="match status" value="1"/>
</dbReference>
<dbReference type="FunFam" id="1.10.132.20:FF:000001">
    <property type="entry name" value="Ribosome-recycling factor"/>
    <property type="match status" value="1"/>
</dbReference>
<dbReference type="FunFam" id="3.30.1360.40:FF:000001">
    <property type="entry name" value="Ribosome-recycling factor"/>
    <property type="match status" value="1"/>
</dbReference>
<dbReference type="Gene3D" id="3.30.1360.40">
    <property type="match status" value="1"/>
</dbReference>
<dbReference type="Gene3D" id="1.10.132.20">
    <property type="entry name" value="Ribosome-recycling factor"/>
    <property type="match status" value="1"/>
</dbReference>
<dbReference type="HAMAP" id="MF_00040">
    <property type="entry name" value="RRF"/>
    <property type="match status" value="1"/>
</dbReference>
<dbReference type="InterPro" id="IPR002661">
    <property type="entry name" value="Ribosome_recyc_fac"/>
</dbReference>
<dbReference type="InterPro" id="IPR023584">
    <property type="entry name" value="Ribosome_recyc_fac_dom"/>
</dbReference>
<dbReference type="InterPro" id="IPR036191">
    <property type="entry name" value="RRF_sf"/>
</dbReference>
<dbReference type="NCBIfam" id="TIGR00496">
    <property type="entry name" value="frr"/>
    <property type="match status" value="1"/>
</dbReference>
<dbReference type="PANTHER" id="PTHR20982:SF3">
    <property type="entry name" value="MITOCHONDRIAL RIBOSOME RECYCLING FACTOR PSEUDO 1"/>
    <property type="match status" value="1"/>
</dbReference>
<dbReference type="PANTHER" id="PTHR20982">
    <property type="entry name" value="RIBOSOME RECYCLING FACTOR"/>
    <property type="match status" value="1"/>
</dbReference>
<dbReference type="Pfam" id="PF01765">
    <property type="entry name" value="RRF"/>
    <property type="match status" value="1"/>
</dbReference>
<dbReference type="SUPFAM" id="SSF55194">
    <property type="entry name" value="Ribosome recycling factor, RRF"/>
    <property type="match status" value="1"/>
</dbReference>
<feature type="chain" id="PRO_1000074591" description="Ribosome-recycling factor">
    <location>
        <begin position="1"/>
        <end position="186"/>
    </location>
</feature>
<protein>
    <recommendedName>
        <fullName evidence="1">Ribosome-recycling factor</fullName>
        <shortName evidence="1">RRF</shortName>
    </recommendedName>
    <alternativeName>
        <fullName evidence="1">Ribosome-releasing factor</fullName>
    </alternativeName>
</protein>
<name>RRF_CHLPM</name>
<proteinExistence type="inferred from homology"/>
<evidence type="ECO:0000255" key="1">
    <source>
        <dbReference type="HAMAP-Rule" id="MF_00040"/>
    </source>
</evidence>
<keyword id="KW-0963">Cytoplasm</keyword>
<keyword id="KW-0648">Protein biosynthesis</keyword>
<reference key="1">
    <citation type="submission" date="2007-03" db="EMBL/GenBank/DDBJ databases">
        <title>Complete sequence of Prosthecochloris vibrioformis DSM 265.</title>
        <authorList>
            <consortium name="US DOE Joint Genome Institute"/>
            <person name="Copeland A."/>
            <person name="Lucas S."/>
            <person name="Lapidus A."/>
            <person name="Barry K."/>
            <person name="Detter J.C."/>
            <person name="Glavina del Rio T."/>
            <person name="Hammon N."/>
            <person name="Israni S."/>
            <person name="Pitluck S."/>
            <person name="Schmutz J."/>
            <person name="Larimer F."/>
            <person name="Land M."/>
            <person name="Hauser L."/>
            <person name="Mikhailova N."/>
            <person name="Li T."/>
            <person name="Overmann J."/>
            <person name="Schuster S.C."/>
            <person name="Bryant D.A."/>
            <person name="Richardson P."/>
        </authorList>
    </citation>
    <scope>NUCLEOTIDE SEQUENCE [LARGE SCALE GENOMIC DNA]</scope>
    <source>
        <strain>DSM 265 / 1930</strain>
    </source>
</reference>